<proteinExistence type="inferred from homology"/>
<name>LEPA_SHEB9</name>
<sequence length="596" mass="65861">MKQIRNFSIIAHIDHGKSTLSDRLIQVCGGLTDREMDAQVLDSMDLERERGITIKAQSVTLDYKAKDGLVYQLNFIDTPGHVDFSYEVSRSLAACEGALLVVDAGQGVEAQTLANCYTALDMNLDVVPILNKIDLPQADPERVAAEIEDIVGIDAIDAVRCSAKTGVGVDEVLEVIVAKIPPPEGDPNAPLQALIIDSWFDNYLGVVSLVRIKHGSLKKGDKFKVMSTGQNHTADRVGIFTPKQTDKTELKTGEVGFVIAGLKEIHGAPVGDTLTLAKNGAEKPLPGFKKVKPQVYAGVFPISTDEYENFRDALNKLSLNDASLFFEPESSSALGFGFRIGYLGLLHMEIVQERLEREYNLELITTAPTVVYEVVMTSGETIYVDNPSDLPAINNIEEMREPIVEANILVPKEYLGNVITLCIEKRGTQVNMVYHGNQVAVTYHLPMAEVVMDFFDRLKSTSRGYASLEYNFIRFDPADMVRLDILINGDRVDALAMVIHRSNIRHRGLALVDKMKELIPRQMFDIAIQAAVGSQIIARSTVKALRKDVTAKCYGGDVSRKKKLLNKQKEGKKRMKQVGNVEVPQEAFLAVLKLNE</sequence>
<gene>
    <name evidence="1" type="primary">lepA</name>
    <name type="ordered locus">Sbal195_1276</name>
</gene>
<protein>
    <recommendedName>
        <fullName evidence="1">Elongation factor 4</fullName>
        <shortName evidence="1">EF-4</shortName>
        <ecNumber evidence="1">3.6.5.n1</ecNumber>
    </recommendedName>
    <alternativeName>
        <fullName evidence="1">Ribosomal back-translocase LepA</fullName>
    </alternativeName>
</protein>
<accession>A9L5N4</accession>
<reference key="1">
    <citation type="submission" date="2007-11" db="EMBL/GenBank/DDBJ databases">
        <title>Complete sequence of chromosome of Shewanella baltica OS195.</title>
        <authorList>
            <consortium name="US DOE Joint Genome Institute"/>
            <person name="Copeland A."/>
            <person name="Lucas S."/>
            <person name="Lapidus A."/>
            <person name="Barry K."/>
            <person name="Glavina del Rio T."/>
            <person name="Dalin E."/>
            <person name="Tice H."/>
            <person name="Pitluck S."/>
            <person name="Chain P."/>
            <person name="Malfatti S."/>
            <person name="Shin M."/>
            <person name="Vergez L."/>
            <person name="Schmutz J."/>
            <person name="Larimer F."/>
            <person name="Land M."/>
            <person name="Hauser L."/>
            <person name="Kyrpides N."/>
            <person name="Kim E."/>
            <person name="Brettar I."/>
            <person name="Rodrigues J."/>
            <person name="Konstantinidis K."/>
            <person name="Klappenbach J."/>
            <person name="Hofle M."/>
            <person name="Tiedje J."/>
            <person name="Richardson P."/>
        </authorList>
    </citation>
    <scope>NUCLEOTIDE SEQUENCE [LARGE SCALE GENOMIC DNA]</scope>
    <source>
        <strain>OS195</strain>
    </source>
</reference>
<evidence type="ECO:0000255" key="1">
    <source>
        <dbReference type="HAMAP-Rule" id="MF_00071"/>
    </source>
</evidence>
<keyword id="KW-0997">Cell inner membrane</keyword>
<keyword id="KW-1003">Cell membrane</keyword>
<keyword id="KW-0342">GTP-binding</keyword>
<keyword id="KW-0378">Hydrolase</keyword>
<keyword id="KW-0472">Membrane</keyword>
<keyword id="KW-0547">Nucleotide-binding</keyword>
<keyword id="KW-0648">Protein biosynthesis</keyword>
<dbReference type="EC" id="3.6.5.n1" evidence="1"/>
<dbReference type="EMBL" id="CP000891">
    <property type="protein sequence ID" value="ABX48451.1"/>
    <property type="molecule type" value="Genomic_DNA"/>
</dbReference>
<dbReference type="RefSeq" id="WP_006085065.1">
    <property type="nucleotide sequence ID" value="NC_009997.1"/>
</dbReference>
<dbReference type="SMR" id="A9L5N4"/>
<dbReference type="GeneID" id="11771544"/>
<dbReference type="KEGG" id="sbn:Sbal195_1276"/>
<dbReference type="HOGENOM" id="CLU_009995_3_3_6"/>
<dbReference type="Proteomes" id="UP000000770">
    <property type="component" value="Chromosome"/>
</dbReference>
<dbReference type="GO" id="GO:0005886">
    <property type="term" value="C:plasma membrane"/>
    <property type="evidence" value="ECO:0007669"/>
    <property type="project" value="UniProtKB-SubCell"/>
</dbReference>
<dbReference type="GO" id="GO:0005525">
    <property type="term" value="F:GTP binding"/>
    <property type="evidence" value="ECO:0007669"/>
    <property type="project" value="UniProtKB-UniRule"/>
</dbReference>
<dbReference type="GO" id="GO:0003924">
    <property type="term" value="F:GTPase activity"/>
    <property type="evidence" value="ECO:0007669"/>
    <property type="project" value="UniProtKB-UniRule"/>
</dbReference>
<dbReference type="GO" id="GO:0097216">
    <property type="term" value="F:guanosine tetraphosphate binding"/>
    <property type="evidence" value="ECO:0007669"/>
    <property type="project" value="UniProtKB-ARBA"/>
</dbReference>
<dbReference type="GO" id="GO:0043022">
    <property type="term" value="F:ribosome binding"/>
    <property type="evidence" value="ECO:0007669"/>
    <property type="project" value="UniProtKB-UniRule"/>
</dbReference>
<dbReference type="GO" id="GO:0003746">
    <property type="term" value="F:translation elongation factor activity"/>
    <property type="evidence" value="ECO:0007669"/>
    <property type="project" value="UniProtKB-UniRule"/>
</dbReference>
<dbReference type="GO" id="GO:0045727">
    <property type="term" value="P:positive regulation of translation"/>
    <property type="evidence" value="ECO:0007669"/>
    <property type="project" value="UniProtKB-UniRule"/>
</dbReference>
<dbReference type="CDD" id="cd03699">
    <property type="entry name" value="EF4_II"/>
    <property type="match status" value="1"/>
</dbReference>
<dbReference type="CDD" id="cd16260">
    <property type="entry name" value="EF4_III"/>
    <property type="match status" value="1"/>
</dbReference>
<dbReference type="CDD" id="cd01890">
    <property type="entry name" value="LepA"/>
    <property type="match status" value="1"/>
</dbReference>
<dbReference type="CDD" id="cd03709">
    <property type="entry name" value="lepA_C"/>
    <property type="match status" value="1"/>
</dbReference>
<dbReference type="FunFam" id="3.40.50.300:FF:000078">
    <property type="entry name" value="Elongation factor 4"/>
    <property type="match status" value="1"/>
</dbReference>
<dbReference type="FunFam" id="2.40.30.10:FF:000015">
    <property type="entry name" value="Translation factor GUF1, mitochondrial"/>
    <property type="match status" value="1"/>
</dbReference>
<dbReference type="FunFam" id="3.30.70.240:FF:000007">
    <property type="entry name" value="Translation factor GUF1, mitochondrial"/>
    <property type="match status" value="1"/>
</dbReference>
<dbReference type="FunFam" id="3.30.70.2570:FF:000001">
    <property type="entry name" value="Translation factor GUF1, mitochondrial"/>
    <property type="match status" value="1"/>
</dbReference>
<dbReference type="FunFam" id="3.30.70.870:FF:000004">
    <property type="entry name" value="Translation factor GUF1, mitochondrial"/>
    <property type="match status" value="1"/>
</dbReference>
<dbReference type="Gene3D" id="3.30.70.240">
    <property type="match status" value="1"/>
</dbReference>
<dbReference type="Gene3D" id="3.30.70.2570">
    <property type="entry name" value="Elongation factor 4, C-terminal domain"/>
    <property type="match status" value="1"/>
</dbReference>
<dbReference type="Gene3D" id="3.30.70.870">
    <property type="entry name" value="Elongation Factor G (Translational Gtpase), domain 3"/>
    <property type="match status" value="1"/>
</dbReference>
<dbReference type="Gene3D" id="3.40.50.300">
    <property type="entry name" value="P-loop containing nucleotide triphosphate hydrolases"/>
    <property type="match status" value="1"/>
</dbReference>
<dbReference type="Gene3D" id="2.40.30.10">
    <property type="entry name" value="Translation factors"/>
    <property type="match status" value="1"/>
</dbReference>
<dbReference type="HAMAP" id="MF_00071">
    <property type="entry name" value="LepA"/>
    <property type="match status" value="1"/>
</dbReference>
<dbReference type="InterPro" id="IPR006297">
    <property type="entry name" value="EF-4"/>
</dbReference>
<dbReference type="InterPro" id="IPR035647">
    <property type="entry name" value="EFG_III/V"/>
</dbReference>
<dbReference type="InterPro" id="IPR000640">
    <property type="entry name" value="EFG_V-like"/>
</dbReference>
<dbReference type="InterPro" id="IPR004161">
    <property type="entry name" value="EFTu-like_2"/>
</dbReference>
<dbReference type="InterPro" id="IPR031157">
    <property type="entry name" value="G_TR_CS"/>
</dbReference>
<dbReference type="InterPro" id="IPR038363">
    <property type="entry name" value="LepA_C_sf"/>
</dbReference>
<dbReference type="InterPro" id="IPR013842">
    <property type="entry name" value="LepA_CTD"/>
</dbReference>
<dbReference type="InterPro" id="IPR035654">
    <property type="entry name" value="LepA_IV"/>
</dbReference>
<dbReference type="InterPro" id="IPR027417">
    <property type="entry name" value="P-loop_NTPase"/>
</dbReference>
<dbReference type="InterPro" id="IPR005225">
    <property type="entry name" value="Small_GTP-bd"/>
</dbReference>
<dbReference type="InterPro" id="IPR000795">
    <property type="entry name" value="T_Tr_GTP-bd_dom"/>
</dbReference>
<dbReference type="InterPro" id="IPR009000">
    <property type="entry name" value="Transl_B-barrel_sf"/>
</dbReference>
<dbReference type="NCBIfam" id="TIGR01393">
    <property type="entry name" value="lepA"/>
    <property type="match status" value="1"/>
</dbReference>
<dbReference type="NCBIfam" id="TIGR00231">
    <property type="entry name" value="small_GTP"/>
    <property type="match status" value="1"/>
</dbReference>
<dbReference type="PANTHER" id="PTHR43512:SF4">
    <property type="entry name" value="TRANSLATION FACTOR GUF1 HOMOLOG, CHLOROPLASTIC"/>
    <property type="match status" value="1"/>
</dbReference>
<dbReference type="PANTHER" id="PTHR43512">
    <property type="entry name" value="TRANSLATION FACTOR GUF1-RELATED"/>
    <property type="match status" value="1"/>
</dbReference>
<dbReference type="Pfam" id="PF00679">
    <property type="entry name" value="EFG_C"/>
    <property type="match status" value="1"/>
</dbReference>
<dbReference type="Pfam" id="PF00009">
    <property type="entry name" value="GTP_EFTU"/>
    <property type="match status" value="1"/>
</dbReference>
<dbReference type="Pfam" id="PF03144">
    <property type="entry name" value="GTP_EFTU_D2"/>
    <property type="match status" value="1"/>
</dbReference>
<dbReference type="Pfam" id="PF06421">
    <property type="entry name" value="LepA_C"/>
    <property type="match status" value="1"/>
</dbReference>
<dbReference type="PRINTS" id="PR00315">
    <property type="entry name" value="ELONGATNFCT"/>
</dbReference>
<dbReference type="SMART" id="SM00838">
    <property type="entry name" value="EFG_C"/>
    <property type="match status" value="1"/>
</dbReference>
<dbReference type="SUPFAM" id="SSF54980">
    <property type="entry name" value="EF-G C-terminal domain-like"/>
    <property type="match status" value="2"/>
</dbReference>
<dbReference type="SUPFAM" id="SSF52540">
    <property type="entry name" value="P-loop containing nucleoside triphosphate hydrolases"/>
    <property type="match status" value="1"/>
</dbReference>
<dbReference type="SUPFAM" id="SSF50447">
    <property type="entry name" value="Translation proteins"/>
    <property type="match status" value="1"/>
</dbReference>
<dbReference type="PROSITE" id="PS00301">
    <property type="entry name" value="G_TR_1"/>
    <property type="match status" value="1"/>
</dbReference>
<dbReference type="PROSITE" id="PS51722">
    <property type="entry name" value="G_TR_2"/>
    <property type="match status" value="1"/>
</dbReference>
<comment type="function">
    <text evidence="1">Required for accurate and efficient protein synthesis under certain stress conditions. May act as a fidelity factor of the translation reaction, by catalyzing a one-codon backward translocation of tRNAs on improperly translocated ribosomes. Back-translocation proceeds from a post-translocation (POST) complex to a pre-translocation (PRE) complex, thus giving elongation factor G a second chance to translocate the tRNAs correctly. Binds to ribosomes in a GTP-dependent manner.</text>
</comment>
<comment type="catalytic activity">
    <reaction evidence="1">
        <text>GTP + H2O = GDP + phosphate + H(+)</text>
        <dbReference type="Rhea" id="RHEA:19669"/>
        <dbReference type="ChEBI" id="CHEBI:15377"/>
        <dbReference type="ChEBI" id="CHEBI:15378"/>
        <dbReference type="ChEBI" id="CHEBI:37565"/>
        <dbReference type="ChEBI" id="CHEBI:43474"/>
        <dbReference type="ChEBI" id="CHEBI:58189"/>
        <dbReference type="EC" id="3.6.5.n1"/>
    </reaction>
</comment>
<comment type="subcellular location">
    <subcellularLocation>
        <location evidence="1">Cell inner membrane</location>
        <topology evidence="1">Peripheral membrane protein</topology>
        <orientation evidence="1">Cytoplasmic side</orientation>
    </subcellularLocation>
</comment>
<comment type="similarity">
    <text evidence="1">Belongs to the TRAFAC class translation factor GTPase superfamily. Classic translation factor GTPase family. LepA subfamily.</text>
</comment>
<feature type="chain" id="PRO_1000075146" description="Elongation factor 4">
    <location>
        <begin position="1"/>
        <end position="596"/>
    </location>
</feature>
<feature type="domain" description="tr-type G">
    <location>
        <begin position="2"/>
        <end position="184"/>
    </location>
</feature>
<feature type="binding site" evidence="1">
    <location>
        <begin position="14"/>
        <end position="19"/>
    </location>
    <ligand>
        <name>GTP</name>
        <dbReference type="ChEBI" id="CHEBI:37565"/>
    </ligand>
</feature>
<feature type="binding site" evidence="1">
    <location>
        <begin position="131"/>
        <end position="134"/>
    </location>
    <ligand>
        <name>GTP</name>
        <dbReference type="ChEBI" id="CHEBI:37565"/>
    </ligand>
</feature>
<organism>
    <name type="scientific">Shewanella baltica (strain OS195)</name>
    <dbReference type="NCBI Taxonomy" id="399599"/>
    <lineage>
        <taxon>Bacteria</taxon>
        <taxon>Pseudomonadati</taxon>
        <taxon>Pseudomonadota</taxon>
        <taxon>Gammaproteobacteria</taxon>
        <taxon>Alteromonadales</taxon>
        <taxon>Shewanellaceae</taxon>
        <taxon>Shewanella</taxon>
    </lineage>
</organism>